<reference key="1">
    <citation type="journal article" date="1984" name="Nucleic Acids Res.">
        <title>Structural analysis of the genes encoding the molybdenum-iron protein of nitrogenase in the Parasponia rhizobium strain ANU289.</title>
        <authorList>
            <person name="Weinman J.J."/>
            <person name="Fellows F.F."/>
            <person name="Gresshoff P.M."/>
            <person name="Shine J."/>
            <person name="Scott K.F."/>
        </authorList>
    </citation>
    <scope>NUCLEOTIDE SEQUENCE [GENOMIC DNA]</scope>
</reference>
<proteinExistence type="inferred from homology"/>
<organism>
    <name type="scientific">Bradyrhizobium sp. (strain ANU 289)</name>
    <dbReference type="NCBI Taxonomy" id="186901"/>
    <lineage>
        <taxon>Bacteria</taxon>
        <taxon>Pseudomonadati</taxon>
        <taxon>Pseudomonadota</taxon>
        <taxon>Alphaproteobacteria</taxon>
        <taxon>Hyphomicrobiales</taxon>
        <taxon>Nitrobacteraceae</taxon>
        <taxon>Bradyrhizobium</taxon>
    </lineage>
</organism>
<name>NIFD_BRASP</name>
<accession>P06120</accession>
<gene>
    <name type="primary">nifD</name>
</gene>
<sequence length="500" mass="56142">MSLATTQSIAEIRARNKELIEEVLKVYPEKTAKRRAKHLNVHQAGKSDCGVKSNIKSIPGVMTIRGCAYAGSKGVVWGPIKDMVHISHGPVGCGQYSWGSRRNYYVGTTGVDSFVTLQFTSDFQEKDIVFGGDKKLIKVLDEIQELFPLNNGITIQSECPIGLIGDDIEAVSRSKSKEYGGKTIVPVRCEGFRGVSQSLGHHIANDAVRDWIFDKLEPEGEPKFQPTPYDVAIIGDYNIGGDAWSSRILLEEMGLRVIAQWSGDGSLAELEATPKAKLNILHCYRSMNYISRHMEEKFGIPWCEYNFFGPSKIAESLRKIAGYFDDKIKEGAERVIEKYQPLVDAVIAKYRPRLEGKTVMLYVGGLRPRHVIGAYEDLGMEVVGTGYEFGHNDDYQRTAQHYVKDSTLIYDDVNGYEFERFVEKVQPDLVGSGIKEKYVFQKMGVPFPEMHSWDYSGPYHGYDGFAIFARDMDMAVNSPIWKKTKAPWKEAAKPKLLAAE</sequence>
<feature type="chain" id="PRO_0000153062" description="Nitrogenase molybdenum-iron protein alpha chain">
    <location>
        <begin position="1"/>
        <end position="500"/>
    </location>
</feature>
<feature type="binding site" evidence="1">
    <location>
        <position position="67"/>
    </location>
    <ligand>
        <name>[8Fe-7S] cluster</name>
        <dbReference type="ChEBI" id="CHEBI:21143"/>
        <note>ligand shared with beta chain</note>
    </ligand>
</feature>
<feature type="binding site" evidence="1">
    <location>
        <position position="93"/>
    </location>
    <ligand>
        <name>[8Fe-7S] cluster</name>
        <dbReference type="ChEBI" id="CHEBI:21143"/>
        <note>ligand shared with beta chain</note>
    </ligand>
</feature>
<feature type="binding site" evidence="1">
    <location>
        <position position="159"/>
    </location>
    <ligand>
        <name>[8Fe-7S] cluster</name>
        <dbReference type="ChEBI" id="CHEBI:21143"/>
        <note>ligand shared with beta chain</note>
    </ligand>
</feature>
<feature type="binding site" evidence="1">
    <location>
        <position position="283"/>
    </location>
    <ligand>
        <name>[7Fe-Mo-9S-C-homocitryl] cluster</name>
        <dbReference type="ChEBI" id="CHEBI:30409"/>
    </ligand>
</feature>
<feature type="binding site" evidence="1">
    <location>
        <position position="451"/>
    </location>
    <ligand>
        <name>[7Fe-Mo-9S-C-homocitryl] cluster</name>
        <dbReference type="ChEBI" id="CHEBI:30409"/>
    </ligand>
</feature>
<keyword id="KW-0067">ATP-binding</keyword>
<keyword id="KW-0408">Iron</keyword>
<keyword id="KW-0411">Iron-sulfur</keyword>
<keyword id="KW-0479">Metal-binding</keyword>
<keyword id="KW-0500">Molybdenum</keyword>
<keyword id="KW-0535">Nitrogen fixation</keyword>
<keyword id="KW-0547">Nucleotide-binding</keyword>
<keyword id="KW-0560">Oxidoreductase</keyword>
<evidence type="ECO:0000250" key="1"/>
<evidence type="ECO:0000305" key="2"/>
<comment type="function">
    <text>This molybdenum-iron protein is part of the nitrogenase complex that catalyzes the key enzymatic reactions in nitrogen fixation.</text>
</comment>
<comment type="catalytic activity">
    <reaction>
        <text>N2 + 8 reduced [2Fe-2S]-[ferredoxin] + 16 ATP + 16 H2O = H2 + 8 oxidized [2Fe-2S]-[ferredoxin] + 2 NH4(+) + 16 ADP + 16 phosphate + 6 H(+)</text>
        <dbReference type="Rhea" id="RHEA:21448"/>
        <dbReference type="Rhea" id="RHEA-COMP:10000"/>
        <dbReference type="Rhea" id="RHEA-COMP:10001"/>
        <dbReference type="ChEBI" id="CHEBI:15377"/>
        <dbReference type="ChEBI" id="CHEBI:15378"/>
        <dbReference type="ChEBI" id="CHEBI:17997"/>
        <dbReference type="ChEBI" id="CHEBI:18276"/>
        <dbReference type="ChEBI" id="CHEBI:28938"/>
        <dbReference type="ChEBI" id="CHEBI:30616"/>
        <dbReference type="ChEBI" id="CHEBI:33737"/>
        <dbReference type="ChEBI" id="CHEBI:33738"/>
        <dbReference type="ChEBI" id="CHEBI:43474"/>
        <dbReference type="ChEBI" id="CHEBI:456216"/>
        <dbReference type="EC" id="1.18.6.1"/>
    </reaction>
</comment>
<comment type="cofactor">
    <cofactor evidence="1">
        <name>[8Fe-7S] cluster</name>
        <dbReference type="ChEBI" id="CHEBI:21143"/>
    </cofactor>
    <text evidence="1">Binds 1 [8Fe-7S] cluster per heterodimer.</text>
</comment>
<comment type="cofactor">
    <cofactor evidence="1">
        <name>[7Fe-Mo-9S-C-homocitryl] cluster</name>
        <dbReference type="ChEBI" id="CHEBI:30409"/>
    </cofactor>
    <text evidence="1">Binds 1 [7Fe-Mo-9S-C-homocitryl] cluster per subunit.</text>
</comment>
<comment type="subunit">
    <text>Tetramer of two alpha and two beta chains. Forms complex with the iron protein (nitrogenase component 2).</text>
</comment>
<comment type="similarity">
    <text evidence="2">Belongs to the NifD/NifK/NifE/NifN family.</text>
</comment>
<protein>
    <recommendedName>
        <fullName>Nitrogenase molybdenum-iron protein alpha chain</fullName>
        <ecNumber>1.18.6.1</ecNumber>
    </recommendedName>
    <alternativeName>
        <fullName>Dinitrogenase</fullName>
    </alternativeName>
    <alternativeName>
        <fullName>Nitrogenase component I</fullName>
    </alternativeName>
</protein>
<dbReference type="EC" id="1.18.6.1"/>
<dbReference type="EMBL" id="X01139">
    <property type="protein sequence ID" value="CAA25596.1"/>
    <property type="molecule type" value="Genomic_DNA"/>
</dbReference>
<dbReference type="SMR" id="P06120"/>
<dbReference type="GO" id="GO:0016612">
    <property type="term" value="C:molybdenum-iron nitrogenase complex"/>
    <property type="evidence" value="ECO:0007669"/>
    <property type="project" value="InterPro"/>
</dbReference>
<dbReference type="GO" id="GO:0005524">
    <property type="term" value="F:ATP binding"/>
    <property type="evidence" value="ECO:0007669"/>
    <property type="project" value="UniProtKB-KW"/>
</dbReference>
<dbReference type="GO" id="GO:0051536">
    <property type="term" value="F:iron-sulfur cluster binding"/>
    <property type="evidence" value="ECO:0007669"/>
    <property type="project" value="UniProtKB-KW"/>
</dbReference>
<dbReference type="GO" id="GO:0046872">
    <property type="term" value="F:metal ion binding"/>
    <property type="evidence" value="ECO:0007669"/>
    <property type="project" value="UniProtKB-KW"/>
</dbReference>
<dbReference type="GO" id="GO:0016163">
    <property type="term" value="F:nitrogenase activity"/>
    <property type="evidence" value="ECO:0007669"/>
    <property type="project" value="UniProtKB-EC"/>
</dbReference>
<dbReference type="GO" id="GO:0009399">
    <property type="term" value="P:nitrogen fixation"/>
    <property type="evidence" value="ECO:0007669"/>
    <property type="project" value="UniProtKB-KW"/>
</dbReference>
<dbReference type="CDD" id="cd01976">
    <property type="entry name" value="Nitrogenase_MoFe_alpha"/>
    <property type="match status" value="1"/>
</dbReference>
<dbReference type="Gene3D" id="3.40.50.1980">
    <property type="entry name" value="Nitrogenase molybdenum iron protein domain"/>
    <property type="match status" value="3"/>
</dbReference>
<dbReference type="InterPro" id="IPR000510">
    <property type="entry name" value="Nase/OxRdtase_comp1"/>
</dbReference>
<dbReference type="InterPro" id="IPR010143">
    <property type="entry name" value="Nase_comp1_asu"/>
</dbReference>
<dbReference type="InterPro" id="IPR000318">
    <property type="entry name" value="Nase_comp1_CS"/>
</dbReference>
<dbReference type="InterPro" id="IPR005972">
    <property type="entry name" value="Nase_Mo-Fe_asu"/>
</dbReference>
<dbReference type="NCBIfam" id="TIGR01862">
    <property type="entry name" value="N2-ase-Ialpha"/>
    <property type="match status" value="1"/>
</dbReference>
<dbReference type="NCBIfam" id="TIGR01282">
    <property type="entry name" value="nifD"/>
    <property type="match status" value="1"/>
</dbReference>
<dbReference type="PANTHER" id="PTHR43457">
    <property type="entry name" value="NITROGENASE MOLYBDENUM-IRON PROTEIN ALPHA CHAIN"/>
    <property type="match status" value="1"/>
</dbReference>
<dbReference type="PANTHER" id="PTHR43457:SF1">
    <property type="entry name" value="NITROGENASE MOLYBDENUM-IRON PROTEIN ALPHA CHAIN"/>
    <property type="match status" value="1"/>
</dbReference>
<dbReference type="Pfam" id="PF00148">
    <property type="entry name" value="Oxidored_nitro"/>
    <property type="match status" value="1"/>
</dbReference>
<dbReference type="SUPFAM" id="SSF53807">
    <property type="entry name" value="Helical backbone' metal receptor"/>
    <property type="match status" value="1"/>
</dbReference>
<dbReference type="PROSITE" id="PS00699">
    <property type="entry name" value="NITROGENASE_1_1"/>
    <property type="match status" value="1"/>
</dbReference>
<dbReference type="PROSITE" id="PS00090">
    <property type="entry name" value="NITROGENASE_1_2"/>
    <property type="match status" value="1"/>
</dbReference>